<accession>A0A2I6PJ13</accession>
<feature type="chain" id="PRO_0000446547" description="Prenyl transferase nodC">
    <location>
        <begin position="1"/>
        <end position="326"/>
    </location>
</feature>
<feature type="transmembrane region" description="Helical" evidence="2">
    <location>
        <begin position="8"/>
        <end position="28"/>
    </location>
</feature>
<feature type="binding site" evidence="1">
    <location>
        <position position="95"/>
    </location>
    <ligand>
        <name>isopentenyl diphosphate</name>
        <dbReference type="ChEBI" id="CHEBI:128769"/>
    </ligand>
</feature>
<feature type="binding site" evidence="1">
    <location>
        <position position="102"/>
    </location>
    <ligand>
        <name>Mg(2+)</name>
        <dbReference type="ChEBI" id="CHEBI:18420"/>
        <label>1</label>
    </ligand>
</feature>
<feature type="binding site" evidence="1">
    <location>
        <position position="102"/>
    </location>
    <ligand>
        <name>Mg(2+)</name>
        <dbReference type="ChEBI" id="CHEBI:18420"/>
        <label>2</label>
    </ligand>
</feature>
<feature type="binding site" evidence="1">
    <location>
        <position position="106"/>
    </location>
    <ligand>
        <name>Mg(2+)</name>
        <dbReference type="ChEBI" id="CHEBI:18420"/>
        <label>1</label>
    </ligand>
</feature>
<feature type="binding site" evidence="1">
    <location>
        <position position="106"/>
    </location>
    <ligand>
        <name>Mg(2+)</name>
        <dbReference type="ChEBI" id="CHEBI:18420"/>
        <label>2</label>
    </ligand>
</feature>
<feature type="binding site" evidence="1">
    <location>
        <position position="111"/>
    </location>
    <ligand>
        <name>dimethylallyl diphosphate</name>
        <dbReference type="ChEBI" id="CHEBI:57623"/>
    </ligand>
</feature>
<feature type="binding site" evidence="1">
    <location>
        <position position="195"/>
    </location>
    <ligand>
        <name>dimethylallyl diphosphate</name>
        <dbReference type="ChEBI" id="CHEBI:57623"/>
    </ligand>
</feature>
<feature type="glycosylation site" description="N-linked (GlcNAc...) asparagine" evidence="3">
    <location>
        <position position="139"/>
    </location>
</feature>
<feature type="glycosylation site" description="N-linked (GlcNAc...) asparagine" evidence="3">
    <location>
        <position position="210"/>
    </location>
</feature>
<comment type="function">
    <text evidence="4 7">Cytochrome P450 monooxygenase; part of the gene cluster that mediates the biosynthesis of the indole diterpenes nodulisporic acids (NA). Nodulisporic acid A (NAA) and its chemically modified derivatives are of particular significance because of their highly potent insecticidal activity against blood-feeding arthropods and lack of observable adverse effects on mammals, in particular the tremogenicity associated with the paspaline-derived IDTs is not observed (PubMed:29283570). The geranylgeranyl diphosphate (GGPP) synthase ggs1, localized outside of the cluster, is proposed to catalyze the first step in nodulisporic acid biosynthesis via conversion of farnesyl pyrophosphate and isopentyl pyrophosphate into geranylgeranyl pyrophosphate (GGPP) (PubMed:29283570). Condensation of indole-3-glycerol phosphate with GGPP by the prenyl transferase nodC then forms 3-geranylgeranylindole (3-GGI) (PubMed:29283570). Epoxidation by the FAD-dependent monooxygenase nodM leads to a single-epoxidized-GGI that is substrate of the terpene cyclase nodB for cyclization to yield emindole SB (PubMed:29283570). The terminal methyl carbon, C28, of emindole SB is then oxidized by the cytochrome P450 monooxygenase nodW to produce nodulisporic acid F (NAF), the pentacyclic core of NAA (PubMed:29283570). NAF is converted to nodulisporic acid E (NAE) via prenylation. This step is probably performed by one of the indole diterpene prenyltransferases nodD1 or nodD2 (Probable). Several oxidation steps performed by the FAD-linked oxidoreductase nodO and one of the cytochrome P450 monooxygenase nodR, nodX or nodZ further convert NAE to nodulisporic acid D (NAD) (Probable). NAD is substrate of cytochrome P450 monooxygenase nodJ to produce the precursor of nodulisporic acid C (NAC), converted to NAC by one of the indole diterpene prenyltransferases nodD1 or nodD2 (Probable). The FAD-dependent monooxygenase nodY2 then oxidizes NAC to nodulisporic acid B (NAB) (Probable). Finally NAB is converted to NAA by one of the cytochrome P450 monooxygenases nodR, nodX or nodZ (Probable).</text>
</comment>
<comment type="pathway">
    <text evidence="4">Secondary metabolite biosynthesis.</text>
</comment>
<comment type="subcellular location">
    <subcellularLocation>
        <location evidence="2">Membrane</location>
        <topology evidence="2">Single-pass membrane protein</topology>
    </subcellularLocation>
</comment>
<comment type="similarity">
    <text evidence="6">Belongs to the FPP/GGPP synthase family.</text>
</comment>
<protein>
    <recommendedName>
        <fullName evidence="5">Prenyl transferase nodC</fullName>
        <ecNumber evidence="7">2.5.1.-</ecNumber>
    </recommendedName>
    <alternativeName>
        <fullName evidence="5">Nodulisporic acid biosynthesis cluster protein C</fullName>
    </alternativeName>
</protein>
<name>NODC_HYPPI</name>
<gene>
    <name evidence="5" type="primary">nodC</name>
</gene>
<dbReference type="EC" id="2.5.1.-" evidence="7"/>
<dbReference type="EMBL" id="MG182145">
    <property type="protein sequence ID" value="AUM60067.1"/>
    <property type="molecule type" value="Genomic_DNA"/>
</dbReference>
<dbReference type="SMR" id="A0A2I6PJ13"/>
<dbReference type="GlyCosmos" id="A0A2I6PJ13">
    <property type="glycosylation" value="2 sites, No reported glycans"/>
</dbReference>
<dbReference type="GO" id="GO:0016020">
    <property type="term" value="C:membrane"/>
    <property type="evidence" value="ECO:0007669"/>
    <property type="project" value="UniProtKB-SubCell"/>
</dbReference>
<dbReference type="GO" id="GO:0046872">
    <property type="term" value="F:metal ion binding"/>
    <property type="evidence" value="ECO:0007669"/>
    <property type="project" value="UniProtKB-KW"/>
</dbReference>
<dbReference type="GO" id="GO:0004659">
    <property type="term" value="F:prenyltransferase activity"/>
    <property type="evidence" value="ECO:0007669"/>
    <property type="project" value="InterPro"/>
</dbReference>
<dbReference type="GO" id="GO:0046165">
    <property type="term" value="P:alcohol biosynthetic process"/>
    <property type="evidence" value="ECO:0007669"/>
    <property type="project" value="UniProtKB-ARBA"/>
</dbReference>
<dbReference type="GO" id="GO:0008299">
    <property type="term" value="P:isoprenoid biosynthetic process"/>
    <property type="evidence" value="ECO:0007669"/>
    <property type="project" value="InterPro"/>
</dbReference>
<dbReference type="GO" id="GO:0043386">
    <property type="term" value="P:mycotoxin biosynthetic process"/>
    <property type="evidence" value="ECO:0007669"/>
    <property type="project" value="UniProtKB-ARBA"/>
</dbReference>
<dbReference type="CDD" id="cd00867">
    <property type="entry name" value="Trans_IPPS"/>
    <property type="match status" value="1"/>
</dbReference>
<dbReference type="Gene3D" id="1.10.600.10">
    <property type="entry name" value="Farnesyl Diphosphate Synthase"/>
    <property type="match status" value="1"/>
</dbReference>
<dbReference type="InterPro" id="IPR008949">
    <property type="entry name" value="Isoprenoid_synthase_dom_sf"/>
</dbReference>
<dbReference type="InterPro" id="IPR000092">
    <property type="entry name" value="Polyprenyl_synt"/>
</dbReference>
<dbReference type="PANTHER" id="PTHR12001">
    <property type="entry name" value="GERANYLGERANYL PYROPHOSPHATE SYNTHASE"/>
    <property type="match status" value="1"/>
</dbReference>
<dbReference type="PANTHER" id="PTHR12001:SF44">
    <property type="entry name" value="GERANYLGERANYL PYROPHOSPHATE SYNTHASE"/>
    <property type="match status" value="1"/>
</dbReference>
<dbReference type="Pfam" id="PF00348">
    <property type="entry name" value="polyprenyl_synt"/>
    <property type="match status" value="1"/>
</dbReference>
<dbReference type="SUPFAM" id="SSF48576">
    <property type="entry name" value="Terpenoid synthases"/>
    <property type="match status" value="1"/>
</dbReference>
<evidence type="ECO:0000250" key="1">
    <source>
        <dbReference type="UniProtKB" id="Q12051"/>
    </source>
</evidence>
<evidence type="ECO:0000255" key="2"/>
<evidence type="ECO:0000255" key="3">
    <source>
        <dbReference type="PROSITE-ProRule" id="PRU00498"/>
    </source>
</evidence>
<evidence type="ECO:0000269" key="4">
    <source>
    </source>
</evidence>
<evidence type="ECO:0000303" key="5">
    <source>
    </source>
</evidence>
<evidence type="ECO:0000305" key="6"/>
<evidence type="ECO:0000305" key="7">
    <source>
    </source>
</evidence>
<reference key="1">
    <citation type="journal article" date="2018" name="J. Am. Chem. Soc.">
        <title>Heterologous biosynthesis of nodulisporic acid F.</title>
        <authorList>
            <person name="Van de Bittner K.C."/>
            <person name="Nicholson M.J."/>
            <person name="Bustamante L.Y."/>
            <person name="Kessans S.A."/>
            <person name="Ram A."/>
            <person name="van Dolleweerd C.J."/>
            <person name="Scott B."/>
            <person name="Parker E.J."/>
        </authorList>
    </citation>
    <scope>NUCLEOTIDE SEQUENCE [GENOMIC DNA]</scope>
    <scope>IDENTIFICATION</scope>
    <scope>FUNCTION</scope>
    <scope>PATHWAY</scope>
    <source>
        <strain>MF5954 / ATCC 74245</strain>
    </source>
</reference>
<organism>
    <name type="scientific">Hypoxylon pulicicidum</name>
    <dbReference type="NCBI Taxonomy" id="1243767"/>
    <lineage>
        <taxon>Eukaryota</taxon>
        <taxon>Fungi</taxon>
        <taxon>Dikarya</taxon>
        <taxon>Ascomycota</taxon>
        <taxon>Pezizomycotina</taxon>
        <taxon>Sordariomycetes</taxon>
        <taxon>Xylariomycetidae</taxon>
        <taxon>Xylariales</taxon>
        <taxon>Hypoxylaceae</taxon>
        <taxon>Hypoxylon</taxon>
    </lineage>
</organism>
<sequence length="326" mass="37353">MSLGLQCLAAVLFSALFSLGVILVHLPWRALKSKDPRERILGSPKELVPTCPYEYIRNIYGRHHWAPFVAKLAPNLKESDSDRYTMVLEIMDCIHLCLIMVDDITDDSDYRKGRPAAHIIYGRSETANRAYLRVSQIINKTTQDFPRLAPWVTQSLAEILEGQDISLVWRRDGLTSFPKAHDERVIAYRCMSSLKTGALFRLLGRLVLENRSMDDTLSQVGYYSQLQNDCKNVFSSEYAKAKGTLAEDLRNRELTYPIILALNEPEGFYIEKAFESGSPRDIQNAIGVIQSENVYRACLDELKQYESNVREWVTLWGRKEKLDLTH</sequence>
<keyword id="KW-0325">Glycoprotein</keyword>
<keyword id="KW-0460">Magnesium</keyword>
<keyword id="KW-0472">Membrane</keyword>
<keyword id="KW-0479">Metal-binding</keyword>
<keyword id="KW-0808">Transferase</keyword>
<keyword id="KW-0812">Transmembrane</keyword>
<keyword id="KW-1133">Transmembrane helix</keyword>
<proteinExistence type="inferred from homology"/>